<proteinExistence type="evidence at protein level"/>
<protein>
    <recommendedName>
        <fullName evidence="2">Insulin-like growth factor 2</fullName>
    </recommendedName>
    <alternativeName>
        <fullName evidence="6">Insulin-like growth factor II</fullName>
        <shortName evidence="6">IGF-II</shortName>
    </alternativeName>
    <component>
        <recommendedName>
            <fullName evidence="2">Preptin</fullName>
        </recommendedName>
    </component>
</protein>
<sequence>MGIPMRKPLLVLLVFLALASCCYAAYRPSETLCGGELVDTLQFVCGDRGFYFSRPASRVNRRSRGIVEECCFRSCDLALLETYCATPAKSERDVSTPPTVLPDNFPRYPVGKFFRYDTWKQSAQRLRRGLPALLRARRGRTLAKELEAVREAKRHRPLTARPTRDPAAHGGASPEASGHRK</sequence>
<reference key="1">
    <citation type="journal article" date="1990" name="Nucleic Acids Res.">
        <title>Nucleotide sequence of a porcine insulin-like growth factor II cDNA.</title>
        <authorList>
            <person name="Catchpole I.R."/>
            <person name="Engstroem W."/>
        </authorList>
    </citation>
    <scope>NUCLEOTIDE SEQUENCE [MRNA]</scope>
</reference>
<reference key="2">
    <citation type="journal article" date="2002" name="Mamm. Genome">
        <title>Comparative sequence analysis of the INS-IGF2-H19 gene cluster in pigs.</title>
        <authorList>
            <person name="Amarger V."/>
            <person name="Nguyen M."/>
            <person name="Van Laere A.-S."/>
            <person name="Braunschweig M."/>
            <person name="Nezer C."/>
            <person name="Georges M."/>
            <person name="Andersson L."/>
        </authorList>
    </citation>
    <scope>NUCLEOTIDE SEQUENCE [GENOMIC DNA]</scope>
    <source>
        <strain>Large white</strain>
    </source>
</reference>
<reference key="3">
    <citation type="journal article" date="2003" name="Nature">
        <title>A regulatory mutation in IGF2 causes a major QTL effect on muscle growth in the pig.</title>
        <authorList>
            <person name="Van Laere A.-S."/>
            <person name="Nguyen M."/>
            <person name="Braunschweig M."/>
            <person name="Nezer C."/>
            <person name="Collette C."/>
            <person name="Moreau L."/>
            <person name="Archibald A.L."/>
            <person name="Haley C."/>
            <person name="Buys N."/>
            <person name="Tally M."/>
            <person name="Andersson G."/>
            <person name="Georges M."/>
            <person name="Andersson L."/>
        </authorList>
    </citation>
    <scope>NUCLEOTIDE SEQUENCE [GENOMIC DNA]</scope>
    <source>
        <strain>European wild boar</strain>
        <strain>Hampshire</strain>
        <strain>Japanese wild boar</strain>
        <strain>Landrace</strain>
        <strain>Large white</strain>
        <strain>Meishan</strain>
        <strain>Pietrain</strain>
    </source>
</reference>
<reference key="4">
    <citation type="journal article" date="1989" name="J. Endocrinol.">
        <title>Purification, amino acid sequences and assay cross-reactivities of porcine insulin-like growth factor-I and -II.</title>
        <authorList>
            <person name="Francis G.L."/>
            <person name="Owens P.C."/>
            <person name="McNeil K.A."/>
            <person name="Wallace J.C."/>
            <person name="Ballard F.J."/>
        </authorList>
    </citation>
    <scope>PROTEIN SEQUENCE OF 25-91</scope>
</reference>
<organism>
    <name type="scientific">Sus scrofa</name>
    <name type="common">Pig</name>
    <dbReference type="NCBI Taxonomy" id="9823"/>
    <lineage>
        <taxon>Eukaryota</taxon>
        <taxon>Metazoa</taxon>
        <taxon>Chordata</taxon>
        <taxon>Craniata</taxon>
        <taxon>Vertebrata</taxon>
        <taxon>Euteleostomi</taxon>
        <taxon>Mammalia</taxon>
        <taxon>Eutheria</taxon>
        <taxon>Laurasiatheria</taxon>
        <taxon>Artiodactyla</taxon>
        <taxon>Suina</taxon>
        <taxon>Suidae</taxon>
        <taxon>Sus</taxon>
    </lineage>
</organism>
<gene>
    <name evidence="2" type="primary">IGF2</name>
    <name evidence="7" type="synonym">IGF-2</name>
</gene>
<evidence type="ECO:0000250" key="1"/>
<evidence type="ECO:0000250" key="2">
    <source>
        <dbReference type="UniProtKB" id="P01344"/>
    </source>
</evidence>
<evidence type="ECO:0000250" key="3">
    <source>
        <dbReference type="UniProtKB" id="P07456"/>
    </source>
</evidence>
<evidence type="ECO:0000250" key="4">
    <source>
        <dbReference type="UniProtKB" id="P09535"/>
    </source>
</evidence>
<evidence type="ECO:0000256" key="5">
    <source>
        <dbReference type="SAM" id="MobiDB-lite"/>
    </source>
</evidence>
<evidence type="ECO:0000303" key="6">
    <source>
    </source>
</evidence>
<evidence type="ECO:0000305" key="7"/>
<comment type="function">
    <text evidence="2 4">The insulin-like growth factors possess growth-promoting activity (By similarity). Major fetal growth hormone in mammals. Plays a key role in regulating fetoplacental development. IGF2 is influenced by placental lactogen. Also involved in tissue differentiation. In adults, involved in glucose metabolism in adipose tissue, skeletal muscle and liver. Acts as a ligand for integrin which is required for IGF2 signaling. Positively regulates myogenic transcription factor MYOD1 function by facilitating the recruitment of transcriptional coactivators, thereby controlling muscle terminal differentiation (By similarity). Inhibits myoblast differentiation and modulates metabolism via increasing the mitochondrial respiration rate (By similarity).</text>
</comment>
<comment type="function">
    <text evidence="2 4">Preptin undergoes glucose-mediated co-secretion with insulin, and acts as a physiological amplifier of glucose-mediated insulin secretion. Exhibits osteogenic properties by increasing osteoblast mitogenic activity through phosphoactivation of MAPK1 and MAPK3.</text>
</comment>
<comment type="subunit">
    <text evidence="2 4">Interacts with MYORG; this interaction is required for IGF2 secretion. Interacts with integrins ITGAV:ITGB3 and ITGA6:ITGB4; integrin-binding is required for IGF2 signaling. Interacts with IGFBP2.</text>
</comment>
<comment type="subcellular location">
    <subcellularLocation>
        <location evidence="2 4">Secreted</location>
    </subcellularLocation>
</comment>
<comment type="PTM">
    <text evidence="2">Proteolytically processed by PCSK4, proIGF2 is cleaved at Arg-128 and Arg-92 to generate big-IGF2 and mature IGF2.</text>
</comment>
<comment type="miscellaneous">
    <text evidence="4">The IGF2 locus is imprinted. Paternal inherited gene is expressed, while the maternal inherited gene is imprinted, hence silenced.</text>
</comment>
<comment type="similarity">
    <text evidence="7">Belongs to the insulin family.</text>
</comment>
<accession>P23695</accession>
<dbReference type="EMBL" id="X56094">
    <property type="protein sequence ID" value="CAA39574.1"/>
    <property type="molecule type" value="mRNA"/>
</dbReference>
<dbReference type="EMBL" id="AY044828">
    <property type="protein sequence ID" value="AAL69551.1"/>
    <property type="molecule type" value="Genomic_DNA"/>
</dbReference>
<dbReference type="EMBL" id="AY242098">
    <property type="protein sequence ID" value="AAQ00953.1"/>
    <property type="molecule type" value="Genomic_DNA"/>
</dbReference>
<dbReference type="EMBL" id="AY242099">
    <property type="protein sequence ID" value="AAQ00955.1"/>
    <property type="molecule type" value="Genomic_DNA"/>
</dbReference>
<dbReference type="EMBL" id="AY242100">
    <property type="protein sequence ID" value="AAQ00958.1"/>
    <property type="molecule type" value="Genomic_DNA"/>
</dbReference>
<dbReference type="EMBL" id="AY242101">
    <property type="protein sequence ID" value="AAQ00961.1"/>
    <property type="molecule type" value="Genomic_DNA"/>
</dbReference>
<dbReference type="EMBL" id="AY242102">
    <property type="protein sequence ID" value="AAQ00964.1"/>
    <property type="molecule type" value="Genomic_DNA"/>
</dbReference>
<dbReference type="EMBL" id="AY242103">
    <property type="protein sequence ID" value="AAQ00967.1"/>
    <property type="molecule type" value="Genomic_DNA"/>
</dbReference>
<dbReference type="EMBL" id="AY242104">
    <property type="protein sequence ID" value="AAQ00970.1"/>
    <property type="molecule type" value="Genomic_DNA"/>
</dbReference>
<dbReference type="EMBL" id="AY242105">
    <property type="protein sequence ID" value="AAQ00973.1"/>
    <property type="molecule type" value="Genomic_DNA"/>
</dbReference>
<dbReference type="EMBL" id="AY242106">
    <property type="protein sequence ID" value="AAQ00976.1"/>
    <property type="molecule type" value="Genomic_DNA"/>
</dbReference>
<dbReference type="EMBL" id="AY242107">
    <property type="protein sequence ID" value="AAQ00979.1"/>
    <property type="molecule type" value="Genomic_DNA"/>
</dbReference>
<dbReference type="EMBL" id="AY242108">
    <property type="protein sequence ID" value="AAQ00982.1"/>
    <property type="molecule type" value="Genomic_DNA"/>
</dbReference>
<dbReference type="EMBL" id="AY242109">
    <property type="protein sequence ID" value="AAQ00984.1"/>
    <property type="molecule type" value="Genomic_DNA"/>
</dbReference>
<dbReference type="EMBL" id="AY242110">
    <property type="protein sequence ID" value="AAQ00986.1"/>
    <property type="molecule type" value="Genomic_DNA"/>
</dbReference>
<dbReference type="EMBL" id="AY242111">
    <property type="protein sequence ID" value="AAQ00988.1"/>
    <property type="molecule type" value="Genomic_DNA"/>
</dbReference>
<dbReference type="EMBL" id="AY242112">
    <property type="protein sequence ID" value="AAQ00991.1"/>
    <property type="molecule type" value="Genomic_DNA"/>
</dbReference>
<dbReference type="PIR" id="S12614">
    <property type="entry name" value="B60738"/>
</dbReference>
<dbReference type="RefSeq" id="NP_999048.1">
    <property type="nucleotide sequence ID" value="NM_213883.2"/>
</dbReference>
<dbReference type="RefSeq" id="XP_020936235.1">
    <property type="nucleotide sequence ID" value="XM_021080576.1"/>
</dbReference>
<dbReference type="RefSeq" id="XP_020936280.1">
    <property type="nucleotide sequence ID" value="XM_021080621.1"/>
</dbReference>
<dbReference type="RefSeq" id="XP_020936291.1">
    <property type="nucleotide sequence ID" value="XM_021080632.1"/>
</dbReference>
<dbReference type="RefSeq" id="XP_020936296.1">
    <property type="nucleotide sequence ID" value="XM_021080637.1"/>
</dbReference>
<dbReference type="RefSeq" id="XP_020936300.1">
    <property type="nucleotide sequence ID" value="XM_021080641.1"/>
</dbReference>
<dbReference type="RefSeq" id="XP_020936307.1">
    <property type="nucleotide sequence ID" value="XM_021080648.1"/>
</dbReference>
<dbReference type="BMRB" id="P23695"/>
<dbReference type="SMR" id="P23695"/>
<dbReference type="FunCoup" id="P23695">
    <property type="interactions" value="546"/>
</dbReference>
<dbReference type="STRING" id="9823.ENSSSCP00000056721"/>
<dbReference type="GlyCosmos" id="P23695">
    <property type="glycosylation" value="1 site, No reported glycans"/>
</dbReference>
<dbReference type="GlyGen" id="P23695">
    <property type="glycosylation" value="2 sites"/>
</dbReference>
<dbReference type="PeptideAtlas" id="P23695"/>
<dbReference type="Ensembl" id="ENSSSCT00015005337.1">
    <property type="protein sequence ID" value="ENSSSCP00015002091.1"/>
    <property type="gene ID" value="ENSSSCG00015004041.1"/>
</dbReference>
<dbReference type="Ensembl" id="ENSSSCT00030103755.1">
    <property type="protein sequence ID" value="ENSSSCP00030047984.1"/>
    <property type="gene ID" value="ENSSSCG00030074012.1"/>
</dbReference>
<dbReference type="Ensembl" id="ENSSSCT00030103768.1">
    <property type="protein sequence ID" value="ENSSSCP00030047991.1"/>
    <property type="gene ID" value="ENSSSCG00030074012.1"/>
</dbReference>
<dbReference type="Ensembl" id="ENSSSCT00030103773.1">
    <property type="protein sequence ID" value="ENSSSCP00030047995.1"/>
    <property type="gene ID" value="ENSSSCG00030074012.1"/>
</dbReference>
<dbReference type="Ensembl" id="ENSSSCT00030103785.1">
    <property type="protein sequence ID" value="ENSSSCP00030048005.1"/>
    <property type="gene ID" value="ENSSSCG00030074012.1"/>
</dbReference>
<dbReference type="Ensembl" id="ENSSSCT00030103817.1">
    <property type="protein sequence ID" value="ENSSSCP00030048019.1"/>
    <property type="gene ID" value="ENSSSCG00030074012.1"/>
</dbReference>
<dbReference type="Ensembl" id="ENSSSCT00035026239.1">
    <property type="protein sequence ID" value="ENSSSCP00035009979.1"/>
    <property type="gene ID" value="ENSSSCG00035020195.1"/>
</dbReference>
<dbReference type="Ensembl" id="ENSSSCT00040023119.1">
    <property type="protein sequence ID" value="ENSSSCP00040009714.1"/>
    <property type="gene ID" value="ENSSSCG00040017113.1"/>
</dbReference>
<dbReference type="Ensembl" id="ENSSSCT00055031766.1">
    <property type="protein sequence ID" value="ENSSSCP00055025286.1"/>
    <property type="gene ID" value="ENSSSCG00055016061.1"/>
</dbReference>
<dbReference type="Ensembl" id="ENSSSCT00070030062.1">
    <property type="protein sequence ID" value="ENSSSCP00070025075.1"/>
    <property type="gene ID" value="ENSSSCG00070015301.1"/>
</dbReference>
<dbReference type="Ensembl" id="ENSSSCT00070030070.1">
    <property type="protein sequence ID" value="ENSSSCP00070025080.1"/>
    <property type="gene ID" value="ENSSSCG00070015301.1"/>
</dbReference>
<dbReference type="Ensembl" id="ENSSSCT00070030084.1">
    <property type="protein sequence ID" value="ENSSSCP00070025091.1"/>
    <property type="gene ID" value="ENSSSCG00070015301.1"/>
</dbReference>
<dbReference type="Ensembl" id="ENSSSCT00070030095.1">
    <property type="protein sequence ID" value="ENSSSCP00070025100.1"/>
    <property type="gene ID" value="ENSSSCG00070015301.1"/>
</dbReference>
<dbReference type="Ensembl" id="ENSSSCT00070030111.1">
    <property type="protein sequence ID" value="ENSSSCP00070025114.1"/>
    <property type="gene ID" value="ENSSSCG00070015301.1"/>
</dbReference>
<dbReference type="GeneID" id="396916"/>
<dbReference type="KEGG" id="ssc:396916"/>
<dbReference type="CTD" id="3481"/>
<dbReference type="InParanoid" id="P23695"/>
<dbReference type="OMA" id="WFPIASS"/>
<dbReference type="OrthoDB" id="9449995at2759"/>
<dbReference type="Reactome" id="R-SSC-114608">
    <property type="pathway name" value="Platelet degranulation"/>
</dbReference>
<dbReference type="Reactome" id="R-SSC-2404192">
    <property type="pathway name" value="Signaling by Type 1 Insulin-like Growth Factor 1 Receptor (IGF1R)"/>
</dbReference>
<dbReference type="Reactome" id="R-SSC-2428928">
    <property type="pathway name" value="IRS-related events triggered by IGF1R"/>
</dbReference>
<dbReference type="Reactome" id="R-SSC-2428933">
    <property type="pathway name" value="SHC-related events triggered by IGF1R"/>
</dbReference>
<dbReference type="Reactome" id="R-SSC-381426">
    <property type="pathway name" value="Regulation of Insulin-like Growth Factor (IGF) transport and uptake by Insulin-like Growth Factor Binding Proteins (IGFBPs)"/>
</dbReference>
<dbReference type="Proteomes" id="UP000008227">
    <property type="component" value="Unplaced"/>
</dbReference>
<dbReference type="Proteomes" id="UP000314985">
    <property type="component" value="Unassembled WGS sequence"/>
</dbReference>
<dbReference type="Proteomes" id="UP000694570">
    <property type="component" value="Unplaced"/>
</dbReference>
<dbReference type="Proteomes" id="UP000694571">
    <property type="component" value="Unplaced"/>
</dbReference>
<dbReference type="Proteomes" id="UP000694720">
    <property type="component" value="Unplaced"/>
</dbReference>
<dbReference type="Proteomes" id="UP000694722">
    <property type="component" value="Unplaced"/>
</dbReference>
<dbReference type="Proteomes" id="UP000694723">
    <property type="component" value="Unplaced"/>
</dbReference>
<dbReference type="Proteomes" id="UP000694724">
    <property type="component" value="Unplaced"/>
</dbReference>
<dbReference type="Proteomes" id="UP000694725">
    <property type="component" value="Unplaced"/>
</dbReference>
<dbReference type="Proteomes" id="UP000694726">
    <property type="component" value="Unplaced"/>
</dbReference>
<dbReference type="Proteomes" id="UP000694727">
    <property type="component" value="Unplaced"/>
</dbReference>
<dbReference type="Proteomes" id="UP000694728">
    <property type="component" value="Unplaced"/>
</dbReference>
<dbReference type="GO" id="GO:0005615">
    <property type="term" value="C:extracellular space"/>
    <property type="evidence" value="ECO:0000318"/>
    <property type="project" value="GO_Central"/>
</dbReference>
<dbReference type="GO" id="GO:0008083">
    <property type="term" value="F:growth factor activity"/>
    <property type="evidence" value="ECO:0000318"/>
    <property type="project" value="GO_Central"/>
</dbReference>
<dbReference type="GO" id="GO:0005179">
    <property type="term" value="F:hormone activity"/>
    <property type="evidence" value="ECO:0007669"/>
    <property type="project" value="UniProtKB-KW"/>
</dbReference>
<dbReference type="GO" id="GO:0005159">
    <property type="term" value="F:insulin-like growth factor receptor binding"/>
    <property type="evidence" value="ECO:0000318"/>
    <property type="project" value="GO_Central"/>
</dbReference>
<dbReference type="GO" id="GO:0005178">
    <property type="term" value="F:integrin binding"/>
    <property type="evidence" value="ECO:0000250"/>
    <property type="project" value="UniProtKB"/>
</dbReference>
<dbReference type="GO" id="GO:0043539">
    <property type="term" value="F:protein serine/threonine kinase activator activity"/>
    <property type="evidence" value="ECO:0000318"/>
    <property type="project" value="GO_Central"/>
</dbReference>
<dbReference type="GO" id="GO:0001892">
    <property type="term" value="P:embryonic placenta development"/>
    <property type="evidence" value="ECO:0000250"/>
    <property type="project" value="UniProtKB"/>
</dbReference>
<dbReference type="GO" id="GO:0060669">
    <property type="term" value="P:embryonic placenta morphogenesis"/>
    <property type="evidence" value="ECO:0000250"/>
    <property type="project" value="UniProtKB"/>
</dbReference>
<dbReference type="GO" id="GO:0006006">
    <property type="term" value="P:glucose metabolic process"/>
    <property type="evidence" value="ECO:0007669"/>
    <property type="project" value="UniProtKB-KW"/>
</dbReference>
<dbReference type="GO" id="GO:0001701">
    <property type="term" value="P:in utero embryonic development"/>
    <property type="evidence" value="ECO:0000250"/>
    <property type="project" value="UniProtKB"/>
</dbReference>
<dbReference type="GO" id="GO:0051148">
    <property type="term" value="P:negative regulation of muscle cell differentiation"/>
    <property type="evidence" value="ECO:0000250"/>
    <property type="project" value="UniProtKB"/>
</dbReference>
<dbReference type="GO" id="GO:0000122">
    <property type="term" value="P:negative regulation of transcription by RNA polymerase II"/>
    <property type="evidence" value="ECO:0000250"/>
    <property type="project" value="UniProtKB"/>
</dbReference>
<dbReference type="GO" id="GO:0001503">
    <property type="term" value="P:ossification"/>
    <property type="evidence" value="ECO:0007669"/>
    <property type="project" value="UniProtKB-KW"/>
</dbReference>
<dbReference type="GO" id="GO:0042104">
    <property type="term" value="P:positive regulation of activated T cell proliferation"/>
    <property type="evidence" value="ECO:0000318"/>
    <property type="project" value="GO_Central"/>
</dbReference>
<dbReference type="GO" id="GO:0051781">
    <property type="term" value="P:positive regulation of cell division"/>
    <property type="evidence" value="ECO:0007669"/>
    <property type="project" value="UniProtKB-KW"/>
</dbReference>
<dbReference type="GO" id="GO:0008284">
    <property type="term" value="P:positive regulation of cell population proliferation"/>
    <property type="evidence" value="ECO:0000250"/>
    <property type="project" value="UniProtKB"/>
</dbReference>
<dbReference type="GO" id="GO:0046628">
    <property type="term" value="P:positive regulation of insulin receptor signaling pathway"/>
    <property type="evidence" value="ECO:0000318"/>
    <property type="project" value="GO_Central"/>
</dbReference>
<dbReference type="GO" id="GO:0043410">
    <property type="term" value="P:positive regulation of MAPK cascade"/>
    <property type="evidence" value="ECO:0000318"/>
    <property type="project" value="GO_Central"/>
</dbReference>
<dbReference type="GO" id="GO:0045944">
    <property type="term" value="P:positive regulation of transcription by RNA polymerase II"/>
    <property type="evidence" value="ECO:0000318"/>
    <property type="project" value="GO_Central"/>
</dbReference>
<dbReference type="GO" id="GO:1905564">
    <property type="term" value="P:positive regulation of vascular endothelial cell proliferation"/>
    <property type="evidence" value="ECO:0000318"/>
    <property type="project" value="GO_Central"/>
</dbReference>
<dbReference type="GO" id="GO:0051147">
    <property type="term" value="P:regulation of muscle cell differentiation"/>
    <property type="evidence" value="ECO:0000250"/>
    <property type="project" value="UniProtKB"/>
</dbReference>
<dbReference type="CDD" id="cd04368">
    <property type="entry name" value="IlGF"/>
    <property type="match status" value="1"/>
</dbReference>
<dbReference type="FunFam" id="1.10.100.10:FF:000002">
    <property type="entry name" value="Insulin-like growth factor II preproprotein"/>
    <property type="match status" value="1"/>
</dbReference>
<dbReference type="Gene3D" id="1.10.100.10">
    <property type="entry name" value="Insulin-like"/>
    <property type="match status" value="1"/>
</dbReference>
<dbReference type="InterPro" id="IPR022334">
    <property type="entry name" value="IGF2"/>
</dbReference>
<dbReference type="InterPro" id="IPR013576">
    <property type="entry name" value="IGF2_C"/>
</dbReference>
<dbReference type="InterPro" id="IPR016179">
    <property type="entry name" value="Insulin-like"/>
</dbReference>
<dbReference type="InterPro" id="IPR022350">
    <property type="entry name" value="Insulin-like_growth_factor"/>
</dbReference>
<dbReference type="InterPro" id="IPR036438">
    <property type="entry name" value="Insulin-like_sf"/>
</dbReference>
<dbReference type="InterPro" id="IPR022353">
    <property type="entry name" value="Insulin_CS"/>
</dbReference>
<dbReference type="InterPro" id="IPR022352">
    <property type="entry name" value="Insulin_family"/>
</dbReference>
<dbReference type="PANTHER" id="PTHR46886">
    <property type="entry name" value="INSULIN-LIKE GROWTH FACTOR II"/>
    <property type="match status" value="1"/>
</dbReference>
<dbReference type="PANTHER" id="PTHR46886:SF1">
    <property type="entry name" value="INSULIN-LIKE GROWTH FACTOR II"/>
    <property type="match status" value="1"/>
</dbReference>
<dbReference type="Pfam" id="PF08365">
    <property type="entry name" value="IGF2_C"/>
    <property type="match status" value="1"/>
</dbReference>
<dbReference type="Pfam" id="PF00049">
    <property type="entry name" value="Insulin"/>
    <property type="match status" value="1"/>
</dbReference>
<dbReference type="PRINTS" id="PR02002">
    <property type="entry name" value="INSLNLIKEGF"/>
</dbReference>
<dbReference type="PRINTS" id="PR02006">
    <property type="entry name" value="INSLNLIKEGF2"/>
</dbReference>
<dbReference type="PRINTS" id="PR00276">
    <property type="entry name" value="INSULINFAMLY"/>
</dbReference>
<dbReference type="SMART" id="SM00078">
    <property type="entry name" value="IlGF"/>
    <property type="match status" value="1"/>
</dbReference>
<dbReference type="SUPFAM" id="SSF56994">
    <property type="entry name" value="Insulin-like"/>
    <property type="match status" value="1"/>
</dbReference>
<dbReference type="PROSITE" id="PS00262">
    <property type="entry name" value="INSULIN"/>
    <property type="match status" value="1"/>
</dbReference>
<name>IGF2_PIG</name>
<feature type="signal peptide" evidence="1">
    <location>
        <begin position="1"/>
        <end position="24"/>
    </location>
</feature>
<feature type="chain" id="PRO_0000015727" description="Insulin-like growth factor 2">
    <location>
        <begin position="25"/>
        <end position="91"/>
    </location>
</feature>
<feature type="propeptide" id="PRO_0000015728" description="E peptide">
    <location>
        <begin position="92"/>
        <end position="181"/>
    </location>
</feature>
<feature type="peptide" id="PRO_0000370379" description="Preptin">
    <location>
        <begin position="93"/>
        <end position="126"/>
    </location>
</feature>
<feature type="region of interest" description="B">
    <location>
        <begin position="25"/>
        <end position="52"/>
    </location>
</feature>
<feature type="region of interest" description="C">
    <location>
        <begin position="53"/>
        <end position="64"/>
    </location>
</feature>
<feature type="region of interest" description="A">
    <location>
        <begin position="65"/>
        <end position="85"/>
    </location>
</feature>
<feature type="region of interest" description="D">
    <location>
        <begin position="86"/>
        <end position="91"/>
    </location>
</feature>
<feature type="region of interest" description="Disordered" evidence="5">
    <location>
        <begin position="151"/>
        <end position="181"/>
    </location>
</feature>
<feature type="site" description="Important for interaction with integrin" evidence="2">
    <location>
        <position position="48"/>
    </location>
</feature>
<feature type="site" description="Important for interaction with integrin" evidence="2">
    <location>
        <position position="58"/>
    </location>
</feature>
<feature type="site" description="Important for interaction with integrin" evidence="2">
    <location>
        <position position="61"/>
    </location>
</feature>
<feature type="site" description="Important for interaction with integrin" evidence="2">
    <location>
        <position position="62"/>
    </location>
</feature>
<feature type="glycosylation site" description="O-linked (GalNAc...) threonine" evidence="3">
    <location>
        <position position="163"/>
    </location>
</feature>
<feature type="disulfide bond" evidence="1">
    <location>
        <begin position="33"/>
        <end position="71"/>
    </location>
</feature>
<feature type="disulfide bond" evidence="1">
    <location>
        <begin position="45"/>
        <end position="84"/>
    </location>
</feature>
<feature type="disulfide bond" evidence="1">
    <location>
        <begin position="70"/>
        <end position="75"/>
    </location>
</feature>
<keyword id="KW-0119">Carbohydrate metabolism</keyword>
<keyword id="KW-0165">Cleavage on pair of basic residues</keyword>
<keyword id="KW-0903">Direct protein sequencing</keyword>
<keyword id="KW-1015">Disulfide bond</keyword>
<keyword id="KW-0313">Glucose metabolism</keyword>
<keyword id="KW-0325">Glycoprotein</keyword>
<keyword id="KW-0339">Growth factor</keyword>
<keyword id="KW-0372">Hormone</keyword>
<keyword id="KW-0497">Mitogen</keyword>
<keyword id="KW-0892">Osteogenesis</keyword>
<keyword id="KW-1185">Reference proteome</keyword>
<keyword id="KW-0964">Secreted</keyword>
<keyword id="KW-0732">Signal</keyword>